<feature type="chain" id="PRO_0000357238" description="Methylthioribose-1-phosphate isomerase">
    <location>
        <begin position="1"/>
        <end position="364"/>
    </location>
</feature>
<feature type="active site" description="Proton donor" evidence="1">
    <location>
        <position position="244"/>
    </location>
</feature>
<feature type="binding site" evidence="1">
    <location>
        <begin position="53"/>
        <end position="55"/>
    </location>
    <ligand>
        <name>substrate</name>
    </ligand>
</feature>
<feature type="binding site" evidence="1">
    <location>
        <position position="90"/>
    </location>
    <ligand>
        <name>substrate</name>
    </ligand>
</feature>
<feature type="binding site" evidence="1">
    <location>
        <position position="203"/>
    </location>
    <ligand>
        <name>substrate</name>
    </ligand>
</feature>
<feature type="binding site" evidence="1">
    <location>
        <begin position="254"/>
        <end position="255"/>
    </location>
    <ligand>
        <name>substrate</name>
    </ligand>
</feature>
<feature type="site" description="Transition state stabilizer" evidence="1">
    <location>
        <position position="164"/>
    </location>
</feature>
<name>MTNA_SINMW</name>
<keyword id="KW-0028">Amino-acid biosynthesis</keyword>
<keyword id="KW-0413">Isomerase</keyword>
<keyword id="KW-0486">Methionine biosynthesis</keyword>
<keyword id="KW-0614">Plasmid</keyword>
<organism>
    <name type="scientific">Sinorhizobium medicae (strain WSM419)</name>
    <name type="common">Ensifer medicae</name>
    <dbReference type="NCBI Taxonomy" id="366394"/>
    <lineage>
        <taxon>Bacteria</taxon>
        <taxon>Pseudomonadati</taxon>
        <taxon>Pseudomonadota</taxon>
        <taxon>Alphaproteobacteria</taxon>
        <taxon>Hyphomicrobiales</taxon>
        <taxon>Rhizobiaceae</taxon>
        <taxon>Sinorhizobium/Ensifer group</taxon>
        <taxon>Sinorhizobium</taxon>
    </lineage>
</organism>
<evidence type="ECO:0000255" key="1">
    <source>
        <dbReference type="HAMAP-Rule" id="MF_01678"/>
    </source>
</evidence>
<evidence type="ECO:0000305" key="2"/>
<sequence length="364" mass="39765">MKVGDRHYHTIWLNEDGRSVDIIDQRWLPHEFRVVTLKTIADIAVAIRDMWVRGAPLIGVTAAYGVAIAMAEDPSDTHLDSVWEELHETRPTAINLRWALNAMREHLRALPEQERAEAAYQRAAEIAEEDIELNRAIGANGLKVIREIAARKKPGEPVKILTHCNAGWLATVDYGTATAPIYMAVEEGLPVHVYVDETRPRNQGAYLTAWEMNGHGVPHTLIVDNAGGHLMQHGDVDLVIVGTDRTTANGDVCNKIGTYLKALAARDNGIPFYVALPSPTIDWTVHDGVKEIPIEERAGEEVSFVQGRAPDGSIASVRISPEGSPAANPAFDVTPARLITGLITERGVADASPEGLKALFPERS</sequence>
<protein>
    <recommendedName>
        <fullName evidence="1">Methylthioribose-1-phosphate isomerase</fullName>
        <shortName evidence="1">M1Pi</shortName>
        <shortName evidence="1">MTR-1-P isomerase</shortName>
        <ecNumber evidence="1">5.3.1.23</ecNumber>
    </recommendedName>
    <alternativeName>
        <fullName evidence="1">S-methyl-5-thioribose-1-phosphate isomerase</fullName>
    </alternativeName>
</protein>
<reference key="1">
    <citation type="submission" date="2007-06" db="EMBL/GenBank/DDBJ databases">
        <title>Complete sequence of Sinorhizobium medicae WSM419 plasmid pSMED02.</title>
        <authorList>
            <consortium name="US DOE Joint Genome Institute"/>
            <person name="Copeland A."/>
            <person name="Lucas S."/>
            <person name="Lapidus A."/>
            <person name="Barry K."/>
            <person name="Glavina del Rio T."/>
            <person name="Dalin E."/>
            <person name="Tice H."/>
            <person name="Pitluck S."/>
            <person name="Chain P."/>
            <person name="Malfatti S."/>
            <person name="Shin M."/>
            <person name="Vergez L."/>
            <person name="Schmutz J."/>
            <person name="Larimer F."/>
            <person name="Land M."/>
            <person name="Hauser L."/>
            <person name="Kyrpides N."/>
            <person name="Mikhailova N."/>
            <person name="Reeve W.G."/>
            <person name="Richardson P."/>
        </authorList>
    </citation>
    <scope>NUCLEOTIDE SEQUENCE [LARGE SCALE GENOMIC DNA]</scope>
    <source>
        <strain>WSM419</strain>
    </source>
</reference>
<comment type="function">
    <text evidence="1">Catalyzes the interconversion of methylthioribose-1-phosphate (MTR-1-P) into methylthioribulose-1-phosphate (MTRu-1-P).</text>
</comment>
<comment type="catalytic activity">
    <reaction evidence="1">
        <text>5-(methylsulfanyl)-alpha-D-ribose 1-phosphate = 5-(methylsulfanyl)-D-ribulose 1-phosphate</text>
        <dbReference type="Rhea" id="RHEA:19989"/>
        <dbReference type="ChEBI" id="CHEBI:58533"/>
        <dbReference type="ChEBI" id="CHEBI:58548"/>
        <dbReference type="EC" id="5.3.1.23"/>
    </reaction>
</comment>
<comment type="pathway">
    <text evidence="1">Amino-acid biosynthesis; L-methionine biosynthesis via salvage pathway; L-methionine from S-methyl-5-thio-alpha-D-ribose 1-phosphate: step 1/6.</text>
</comment>
<comment type="similarity">
    <text evidence="2">Belongs to the eIF-2B alpha/beta/delta subunits family. MtnA subfamily.</text>
</comment>
<proteinExistence type="inferred from homology"/>
<accession>A6ULQ4</accession>
<dbReference type="EC" id="5.3.1.23" evidence="1"/>
<dbReference type="EMBL" id="CP000740">
    <property type="protein sequence ID" value="ABR64584.1"/>
    <property type="molecule type" value="Genomic_DNA"/>
</dbReference>
<dbReference type="RefSeq" id="WP_011970692.1">
    <property type="nucleotide sequence ID" value="NC_009621.1"/>
</dbReference>
<dbReference type="RefSeq" id="YP_001314517.1">
    <property type="nucleotide sequence ID" value="NC_009621.1"/>
</dbReference>
<dbReference type="SMR" id="A6ULQ4"/>
<dbReference type="GeneID" id="61613873"/>
<dbReference type="KEGG" id="smd:Smed_5890"/>
<dbReference type="PATRIC" id="fig|366394.8.peg.2395"/>
<dbReference type="eggNOG" id="COG0182">
    <property type="taxonomic scope" value="Bacteria"/>
</dbReference>
<dbReference type="HOGENOM" id="CLU_016218_1_2_5"/>
<dbReference type="OrthoDB" id="9803436at2"/>
<dbReference type="UniPathway" id="UPA00904">
    <property type="reaction ID" value="UER00874"/>
</dbReference>
<dbReference type="Proteomes" id="UP000001108">
    <property type="component" value="Plasmid pSMED02"/>
</dbReference>
<dbReference type="GO" id="GO:0046523">
    <property type="term" value="F:S-methyl-5-thioribose-1-phosphate isomerase activity"/>
    <property type="evidence" value="ECO:0007669"/>
    <property type="project" value="UniProtKB-UniRule"/>
</dbReference>
<dbReference type="GO" id="GO:0019509">
    <property type="term" value="P:L-methionine salvage from methylthioadenosine"/>
    <property type="evidence" value="ECO:0007669"/>
    <property type="project" value="UniProtKB-UniRule"/>
</dbReference>
<dbReference type="FunFam" id="1.20.120.420:FF:000003">
    <property type="entry name" value="Methylthioribose-1-phosphate isomerase"/>
    <property type="match status" value="1"/>
</dbReference>
<dbReference type="FunFam" id="3.40.50.10470:FF:000006">
    <property type="entry name" value="Methylthioribose-1-phosphate isomerase"/>
    <property type="match status" value="1"/>
</dbReference>
<dbReference type="Gene3D" id="1.20.120.420">
    <property type="entry name" value="translation initiation factor eif-2b, domain 1"/>
    <property type="match status" value="1"/>
</dbReference>
<dbReference type="Gene3D" id="3.40.50.10470">
    <property type="entry name" value="Translation initiation factor eif-2b, domain 2"/>
    <property type="match status" value="1"/>
</dbReference>
<dbReference type="HAMAP" id="MF_01678">
    <property type="entry name" value="Salvage_MtnA"/>
    <property type="match status" value="1"/>
</dbReference>
<dbReference type="InterPro" id="IPR000649">
    <property type="entry name" value="IF-2B-related"/>
</dbReference>
<dbReference type="InterPro" id="IPR005251">
    <property type="entry name" value="IF-M1Pi"/>
</dbReference>
<dbReference type="InterPro" id="IPR042529">
    <property type="entry name" value="IF_2B-like_C"/>
</dbReference>
<dbReference type="InterPro" id="IPR011559">
    <property type="entry name" value="Initiation_fac_2B_a/b/d"/>
</dbReference>
<dbReference type="InterPro" id="IPR027363">
    <property type="entry name" value="M1Pi_N"/>
</dbReference>
<dbReference type="InterPro" id="IPR037171">
    <property type="entry name" value="NagB/RpiA_transferase-like"/>
</dbReference>
<dbReference type="NCBIfam" id="TIGR00524">
    <property type="entry name" value="eIF-2B_rel"/>
    <property type="match status" value="1"/>
</dbReference>
<dbReference type="NCBIfam" id="NF004326">
    <property type="entry name" value="PRK05720.1"/>
    <property type="match status" value="1"/>
</dbReference>
<dbReference type="NCBIfam" id="TIGR00512">
    <property type="entry name" value="salvage_mtnA"/>
    <property type="match status" value="1"/>
</dbReference>
<dbReference type="PANTHER" id="PTHR43475">
    <property type="entry name" value="METHYLTHIORIBOSE-1-PHOSPHATE ISOMERASE"/>
    <property type="match status" value="1"/>
</dbReference>
<dbReference type="PANTHER" id="PTHR43475:SF1">
    <property type="entry name" value="METHYLTHIORIBOSE-1-PHOSPHATE ISOMERASE"/>
    <property type="match status" value="1"/>
</dbReference>
<dbReference type="Pfam" id="PF01008">
    <property type="entry name" value="IF-2B"/>
    <property type="match status" value="1"/>
</dbReference>
<dbReference type="SUPFAM" id="SSF100950">
    <property type="entry name" value="NagB/RpiA/CoA transferase-like"/>
    <property type="match status" value="1"/>
</dbReference>
<gene>
    <name evidence="1" type="primary">mtnA</name>
    <name type="ordered locus">Smed_5890</name>
</gene>
<geneLocation type="plasmid">
    <name>pSMED02</name>
</geneLocation>